<accession>Q2FQC0</accession>
<dbReference type="EMBL" id="CP000254">
    <property type="protein sequence ID" value="ABD40631.1"/>
    <property type="molecule type" value="Genomic_DNA"/>
</dbReference>
<dbReference type="RefSeq" id="WP_011447910.1">
    <property type="nucleotide sequence ID" value="NC_007796.1"/>
</dbReference>
<dbReference type="STRING" id="323259.Mhun_0881"/>
<dbReference type="EnsemblBacteria" id="ABD40631">
    <property type="protein sequence ID" value="ABD40631"/>
    <property type="gene ID" value="Mhun_0881"/>
</dbReference>
<dbReference type="GeneID" id="3923603"/>
<dbReference type="KEGG" id="mhu:Mhun_0881"/>
<dbReference type="eggNOG" id="arCOG05242">
    <property type="taxonomic scope" value="Archaea"/>
</dbReference>
<dbReference type="HOGENOM" id="CLU_008142_4_2_2"/>
<dbReference type="InParanoid" id="Q2FQC0"/>
<dbReference type="OrthoDB" id="115647at2157"/>
<dbReference type="Proteomes" id="UP000001941">
    <property type="component" value="Chromosome"/>
</dbReference>
<dbReference type="GO" id="GO:0005886">
    <property type="term" value="C:plasma membrane"/>
    <property type="evidence" value="ECO:0007669"/>
    <property type="project" value="UniProtKB-SubCell"/>
</dbReference>
<dbReference type="GO" id="GO:0015079">
    <property type="term" value="F:potassium ion transmembrane transporter activity"/>
    <property type="evidence" value="ECO:0007669"/>
    <property type="project" value="UniProtKB-UniRule"/>
</dbReference>
<dbReference type="GO" id="GO:0015293">
    <property type="term" value="F:symporter activity"/>
    <property type="evidence" value="ECO:0007669"/>
    <property type="project" value="UniProtKB-UniRule"/>
</dbReference>
<dbReference type="HAMAP" id="MF_01522">
    <property type="entry name" value="Kup"/>
    <property type="match status" value="1"/>
</dbReference>
<dbReference type="InterPro" id="IPR003855">
    <property type="entry name" value="K+_transporter"/>
</dbReference>
<dbReference type="InterPro" id="IPR053952">
    <property type="entry name" value="K_trans_C"/>
</dbReference>
<dbReference type="InterPro" id="IPR053951">
    <property type="entry name" value="K_trans_N"/>
</dbReference>
<dbReference type="InterPro" id="IPR023051">
    <property type="entry name" value="Kup"/>
</dbReference>
<dbReference type="PANTHER" id="PTHR30540:SF83">
    <property type="entry name" value="K+ POTASSIUM TRANSPORTER"/>
    <property type="match status" value="1"/>
</dbReference>
<dbReference type="PANTHER" id="PTHR30540">
    <property type="entry name" value="OSMOTIC STRESS POTASSIUM TRANSPORTER"/>
    <property type="match status" value="1"/>
</dbReference>
<dbReference type="Pfam" id="PF02705">
    <property type="entry name" value="K_trans"/>
    <property type="match status" value="1"/>
</dbReference>
<dbReference type="Pfam" id="PF22776">
    <property type="entry name" value="K_trans_C"/>
    <property type="match status" value="1"/>
</dbReference>
<gene>
    <name evidence="1" type="primary">kup</name>
    <name type="ordered locus">Mhun_0881</name>
</gene>
<sequence length="611" mass="68438">MSRRTISKTMEHPSKTSIIKAAGLVFGDIGTSPIYTLAVLFLFLPPTPENIMGAVSLIFWTLLIMVTVQYTFLAMRLSETGEGGTLVLKGILIPLLKKPKGVAVFTLLATLGISLMIGECVITPAISILSAVEGVRQIPGFELIAQDWLIFLAILIALGLFLFQKRGTEGVSRTFGPVMVIWFLTLFISGAISVAFSPEILLAINPIYAVEFFIHNGLLGFFSLSMIVLCATGAEALFADMGHLGREPIQYAWGFVFIAVFFSYLGQAAYLLRNTDVINPLFEMIFSLSQILYIPFLLLMIIATIIASQAVISGIFSIIYQAITTHLLPMLPVDYTSDELRTQIYINTVNWLLCIAVICVLLIFQYSERLASAYGLAVTGTMSITGSFMIAIFLQRRKYLYMGIALIVTLVDITYFLSTVSKITHGGYLSLVIAAIPFTIVIIYTSGQRALYRSMKPMGHDQFIKKYTRAYKTARHLRGTALFFARSLDQVPAYISRTMFNNEIIYEENVIISLDIKDEPYGFSWHFDKSIEPGLSHLSISYGYMQIIDLMRIIRDAGIEEKTIFYGMEEIVTRNIIWKIFSAIKRLCPSFVQYYRLPSHKVHGVITRVEL</sequence>
<comment type="function">
    <text evidence="1">Transport of potassium into the cell. Likely operates as a K(+):H(+) symporter.</text>
</comment>
<comment type="catalytic activity">
    <reaction evidence="1">
        <text>K(+)(in) + H(+)(in) = K(+)(out) + H(+)(out)</text>
        <dbReference type="Rhea" id="RHEA:28490"/>
        <dbReference type="ChEBI" id="CHEBI:15378"/>
        <dbReference type="ChEBI" id="CHEBI:29103"/>
    </reaction>
    <physiologicalReaction direction="right-to-left" evidence="1">
        <dbReference type="Rhea" id="RHEA:28492"/>
    </physiologicalReaction>
</comment>
<comment type="subcellular location">
    <subcellularLocation>
        <location evidence="1">Cell membrane</location>
        <topology evidence="1">Multi-pass membrane protein</topology>
    </subcellularLocation>
</comment>
<comment type="similarity">
    <text evidence="1">Belongs to the HAK/KUP transporter (TC 2.A.72) family.</text>
</comment>
<name>KUP_METHJ</name>
<reference key="1">
    <citation type="journal article" date="2016" name="Stand. Genomic Sci.">
        <title>Complete genome sequence of Methanospirillum hungatei type strain JF1.</title>
        <authorList>
            <person name="Gunsalus R.P."/>
            <person name="Cook L.E."/>
            <person name="Crable B."/>
            <person name="Rohlin L."/>
            <person name="McDonald E."/>
            <person name="Mouttaki H."/>
            <person name="Sieber J.R."/>
            <person name="Poweleit N."/>
            <person name="Zhou H."/>
            <person name="Lapidus A.L."/>
            <person name="Daligault H.E."/>
            <person name="Land M."/>
            <person name="Gilna P."/>
            <person name="Ivanova N."/>
            <person name="Kyrpides N."/>
            <person name="Culley D.E."/>
            <person name="McInerney M.J."/>
        </authorList>
    </citation>
    <scope>NUCLEOTIDE SEQUENCE [LARGE SCALE GENOMIC DNA]</scope>
    <source>
        <strain>ATCC 27890 / DSM 864 / NBRC 100397 / JF-1</strain>
    </source>
</reference>
<organism>
    <name type="scientific">Methanospirillum hungatei JF-1 (strain ATCC 27890 / DSM 864 / NBRC 100397 / JF-1)</name>
    <dbReference type="NCBI Taxonomy" id="323259"/>
    <lineage>
        <taxon>Archaea</taxon>
        <taxon>Methanobacteriati</taxon>
        <taxon>Methanobacteriota</taxon>
        <taxon>Stenosarchaea group</taxon>
        <taxon>Methanomicrobia</taxon>
        <taxon>Methanomicrobiales</taxon>
        <taxon>Methanospirillaceae</taxon>
        <taxon>Methanospirillum</taxon>
    </lineage>
</organism>
<evidence type="ECO:0000255" key="1">
    <source>
        <dbReference type="HAMAP-Rule" id="MF_01522"/>
    </source>
</evidence>
<feature type="chain" id="PRO_0000279848" description="Probable potassium transport system protein Kup">
    <location>
        <begin position="1"/>
        <end position="611"/>
    </location>
</feature>
<feature type="transmembrane region" description="Helical" evidence="1">
    <location>
        <begin position="24"/>
        <end position="44"/>
    </location>
</feature>
<feature type="transmembrane region" description="Helical" evidence="1">
    <location>
        <begin position="55"/>
        <end position="75"/>
    </location>
</feature>
<feature type="transmembrane region" description="Helical" evidence="1">
    <location>
        <begin position="102"/>
        <end position="122"/>
    </location>
</feature>
<feature type="transmembrane region" description="Helical" evidence="1">
    <location>
        <begin position="143"/>
        <end position="163"/>
    </location>
</feature>
<feature type="transmembrane region" description="Helical" evidence="1">
    <location>
        <begin position="175"/>
        <end position="195"/>
    </location>
</feature>
<feature type="transmembrane region" description="Helical" evidence="1">
    <location>
        <begin position="218"/>
        <end position="238"/>
    </location>
</feature>
<feature type="transmembrane region" description="Helical" evidence="1">
    <location>
        <begin position="252"/>
        <end position="272"/>
    </location>
</feature>
<feature type="transmembrane region" description="Helical" evidence="1">
    <location>
        <begin position="275"/>
        <end position="295"/>
    </location>
</feature>
<feature type="transmembrane region" description="Helical" evidence="1">
    <location>
        <begin position="296"/>
        <end position="316"/>
    </location>
</feature>
<feature type="transmembrane region" description="Helical" evidence="1">
    <location>
        <begin position="344"/>
        <end position="364"/>
    </location>
</feature>
<feature type="transmembrane region" description="Helical" evidence="1">
    <location>
        <begin position="374"/>
        <end position="394"/>
    </location>
</feature>
<feature type="transmembrane region" description="Helical" evidence="1">
    <location>
        <begin position="400"/>
        <end position="420"/>
    </location>
</feature>
<feature type="transmembrane region" description="Helical" evidence="1">
    <location>
        <begin position="423"/>
        <end position="443"/>
    </location>
</feature>
<proteinExistence type="inferred from homology"/>
<keyword id="KW-1003">Cell membrane</keyword>
<keyword id="KW-0406">Ion transport</keyword>
<keyword id="KW-0472">Membrane</keyword>
<keyword id="KW-0630">Potassium</keyword>
<keyword id="KW-0633">Potassium transport</keyword>
<keyword id="KW-1185">Reference proteome</keyword>
<keyword id="KW-0769">Symport</keyword>
<keyword id="KW-0812">Transmembrane</keyword>
<keyword id="KW-1133">Transmembrane helix</keyword>
<keyword id="KW-0813">Transport</keyword>
<protein>
    <recommendedName>
        <fullName evidence="1">Probable potassium transport system protein Kup</fullName>
    </recommendedName>
</protein>